<organism>
    <name type="scientific">Streptomyces avermitilis (strain ATCC 31267 / DSM 46492 / JCM 5070 / NBRC 14893 / NCIMB 12804 / NRRL 8165 / MA-4680)</name>
    <dbReference type="NCBI Taxonomy" id="227882"/>
    <lineage>
        <taxon>Bacteria</taxon>
        <taxon>Bacillati</taxon>
        <taxon>Actinomycetota</taxon>
        <taxon>Actinomycetes</taxon>
        <taxon>Kitasatosporales</taxon>
        <taxon>Streptomycetaceae</taxon>
        <taxon>Streptomyces</taxon>
    </lineage>
</organism>
<dbReference type="EC" id="1.3.1.86"/>
<dbReference type="EMBL" id="BA000030">
    <property type="protein sequence ID" value="BAC69622.1"/>
    <property type="molecule type" value="Genomic_DNA"/>
</dbReference>
<dbReference type="SMR" id="Q82LU9"/>
<dbReference type="GeneID" id="41539011"/>
<dbReference type="KEGG" id="sma:SAVERM_1911"/>
<dbReference type="eggNOG" id="COG0604">
    <property type="taxonomic scope" value="Bacteria"/>
</dbReference>
<dbReference type="HOGENOM" id="CLU_026673_5_0_11"/>
<dbReference type="OrthoDB" id="9790818at2"/>
<dbReference type="Proteomes" id="UP000000428">
    <property type="component" value="Chromosome"/>
</dbReference>
<dbReference type="GO" id="GO:0043880">
    <property type="term" value="F:crotonyl-CoA reductase activity"/>
    <property type="evidence" value="ECO:0000314"/>
    <property type="project" value="UniProtKB"/>
</dbReference>
<dbReference type="GO" id="GO:0046872">
    <property type="term" value="F:metal ion binding"/>
    <property type="evidence" value="ECO:0007669"/>
    <property type="project" value="UniProtKB-KW"/>
</dbReference>
<dbReference type="GO" id="GO:0050661">
    <property type="term" value="F:NADP binding"/>
    <property type="evidence" value="ECO:0000314"/>
    <property type="project" value="UniProtKB"/>
</dbReference>
<dbReference type="GO" id="GO:0006631">
    <property type="term" value="P:fatty acid metabolic process"/>
    <property type="evidence" value="ECO:0000314"/>
    <property type="project" value="UniProtKB"/>
</dbReference>
<dbReference type="CDD" id="cd08246">
    <property type="entry name" value="crotonyl_coA_red"/>
    <property type="match status" value="1"/>
</dbReference>
<dbReference type="FunFam" id="3.90.180.10:FF:000011">
    <property type="entry name" value="Crotonyl-CoA carboxylase/reductase"/>
    <property type="match status" value="1"/>
</dbReference>
<dbReference type="FunFam" id="3.90.180.10:FF:000020">
    <property type="entry name" value="Crotonyl-CoA reductase"/>
    <property type="match status" value="1"/>
</dbReference>
<dbReference type="Gene3D" id="3.90.180.10">
    <property type="entry name" value="Medium-chain alcohol dehydrogenases, catalytic domain"/>
    <property type="match status" value="2"/>
</dbReference>
<dbReference type="InterPro" id="IPR013149">
    <property type="entry name" value="ADH-like_C"/>
</dbReference>
<dbReference type="InterPro" id="IPR013154">
    <property type="entry name" value="ADH-like_N"/>
</dbReference>
<dbReference type="InterPro" id="IPR010085">
    <property type="entry name" value="Crot_CoA_red"/>
</dbReference>
<dbReference type="InterPro" id="IPR011032">
    <property type="entry name" value="GroES-like_sf"/>
</dbReference>
<dbReference type="InterPro" id="IPR036291">
    <property type="entry name" value="NAD(P)-bd_dom_sf"/>
</dbReference>
<dbReference type="InterPro" id="IPR020843">
    <property type="entry name" value="PKS_ER"/>
</dbReference>
<dbReference type="InterPro" id="IPR051603">
    <property type="entry name" value="Zinc-ADH_QOR/CCCR"/>
</dbReference>
<dbReference type="NCBIfam" id="TIGR01751">
    <property type="entry name" value="crot-CoA-red"/>
    <property type="match status" value="1"/>
</dbReference>
<dbReference type="PANTHER" id="PTHR44154">
    <property type="entry name" value="QUINONE OXIDOREDUCTASE"/>
    <property type="match status" value="1"/>
</dbReference>
<dbReference type="PANTHER" id="PTHR44154:SF1">
    <property type="entry name" value="QUINONE OXIDOREDUCTASE"/>
    <property type="match status" value="1"/>
</dbReference>
<dbReference type="Pfam" id="PF08240">
    <property type="entry name" value="ADH_N"/>
    <property type="match status" value="1"/>
</dbReference>
<dbReference type="Pfam" id="PF00107">
    <property type="entry name" value="ADH_zinc_N"/>
    <property type="match status" value="1"/>
</dbReference>
<dbReference type="SMART" id="SM00829">
    <property type="entry name" value="PKS_ER"/>
    <property type="match status" value="1"/>
</dbReference>
<dbReference type="SUPFAM" id="SSF50129">
    <property type="entry name" value="GroES-like"/>
    <property type="match status" value="1"/>
</dbReference>
<dbReference type="SUPFAM" id="SSF51735">
    <property type="entry name" value="NAD(P)-binding Rossmann-fold domains"/>
    <property type="match status" value="1"/>
</dbReference>
<sequence>MKEILDAIQSQTATSADFAALPLPDSYRAITVHKDETEMFAGLSTRDKDPRKSIHLDDVPVPELGPGEALVAVMASSVNYNSVWTSIFEPVSTFNFLERYGRLSDLSKRHDLPYHIIGSDLAGVVLRTGPGVNSWKPGDEVVAHCLSVELESSDGHNDTMLDPEQRIWGFETNFGGLAEIALVKSNQLMPKPDHLSWEEAAAPGLVNSTAYRQLVSRNGAGMKQGDNVLIWGASGGLGSYATQFALAGGANPICVVSSEQKADICRSMGAEAIIDRNAEGYKFWKDETTQDPKEWKRFGKRIREFTGGEDIDIVFEHPGRETFGASVYVTRKGGTITTCASTSGYMHEYDNRYLWMSLKRIIGSHFANYREAWEANRLVAKGKIHPTLSKVYSLEDTGQAAYDVHRNLHQGKVGVLALAPREGLGVRDEEKRAQHIDAINRFRNI</sequence>
<keyword id="KW-0903">Direct protein sequencing</keyword>
<keyword id="KW-0479">Metal-binding</keyword>
<keyword id="KW-0521">NADP</keyword>
<keyword id="KW-0560">Oxidoreductase</keyword>
<keyword id="KW-1185">Reference proteome</keyword>
<keyword id="KW-0862">Zinc</keyword>
<accession>Q82LU9</accession>
<protein>
    <recommendedName>
        <fullName>Crotonyl-CoA reductase</fullName>
        <ecNumber>1.3.1.86</ecNumber>
    </recommendedName>
</protein>
<reference key="1">
    <citation type="journal article" date="2001" name="Proc. Natl. Acad. Sci. U.S.A.">
        <title>Genome sequence of an industrial microorganism Streptomyces avermitilis: deducing the ability of producing secondary metabolites.</title>
        <authorList>
            <person name="Omura S."/>
            <person name="Ikeda H."/>
            <person name="Ishikawa J."/>
            <person name="Hanamoto A."/>
            <person name="Takahashi C."/>
            <person name="Shinose M."/>
            <person name="Takahashi Y."/>
            <person name="Horikawa H."/>
            <person name="Nakazawa H."/>
            <person name="Osonoe T."/>
            <person name="Kikuchi H."/>
            <person name="Shiba T."/>
            <person name="Sakaki Y."/>
            <person name="Hattori M."/>
        </authorList>
    </citation>
    <scope>NUCLEOTIDE SEQUENCE [LARGE SCALE GENOMIC DNA]</scope>
    <source>
        <strain>ATCC 31267 / DSM 46492 / JCM 5070 / NBRC 14893 / NCIMB 12804 / NRRL 8165 / MA-4680</strain>
    </source>
</reference>
<reference key="2">
    <citation type="journal article" date="2003" name="Nat. Biotechnol.">
        <title>Complete genome sequence and comparative analysis of the industrial microorganism Streptomyces avermitilis.</title>
        <authorList>
            <person name="Ikeda H."/>
            <person name="Ishikawa J."/>
            <person name="Hanamoto A."/>
            <person name="Shinose M."/>
            <person name="Kikuchi H."/>
            <person name="Shiba T."/>
            <person name="Sakaki Y."/>
            <person name="Hattori M."/>
            <person name="Omura S."/>
        </authorList>
    </citation>
    <scope>NUCLEOTIDE SEQUENCE [LARGE SCALE GENOMIC DNA]</scope>
    <source>
        <strain>ATCC 31267 / DSM 46492 / JCM 5070 / NBRC 14893 / NCIMB 12804 / NRRL 8165 / MA-4680</strain>
    </source>
</reference>
<reference key="3">
    <citation type="journal article" date="1995" name="Eur. J. Biochem.">
        <title>Purification of crotonyl-CoA reductase from Streptomyces collinus and cloning, sequencing and expression of the corresponding gene in Escherichia coli.</title>
        <authorList>
            <person name="Wallace K.K."/>
            <person name="Bao Z.Y."/>
            <person name="Dai H."/>
            <person name="Digate R."/>
            <person name="Schuler G."/>
            <person name="Speedie M.K."/>
            <person name="Reynolds K.A."/>
        </authorList>
    </citation>
    <scope>PROTEIN SEQUENCE OF N-TERMINUS</scope>
    <scope>FUNCTION AS A CROTONYL-COA REDUCTASE</scope>
    <scope>BIOPHYSICOCHEMICAL PROPERTIES</scope>
    <scope>ACTIVITY REGULATION</scope>
    <scope>SUBUNIT</scope>
</reference>
<evidence type="ECO:0000250" key="1"/>
<evidence type="ECO:0000269" key="2">
    <source>
    </source>
</evidence>
<evidence type="ECO:0000305" key="3"/>
<gene>
    <name type="primary">ccrA2</name>
    <name type="ordered locus">SAV_1911</name>
</gene>
<feature type="chain" id="PRO_0000418981" description="Crotonyl-CoA reductase">
    <location>
        <begin position="1"/>
        <end position="445"/>
    </location>
</feature>
<feature type="binding site" evidence="1">
    <location>
        <position position="149"/>
    </location>
    <ligand>
        <name>Zn(2+)</name>
        <dbReference type="ChEBI" id="CHEBI:29105"/>
    </ligand>
</feature>
<name>CCR_STRAW</name>
<comment type="function">
    <text evidence="2">Catalyzes the conversion of crotonyl-CoA to butyryl-CoA. It uses only NADP as electron donor. May have a role in providing butyryl-CoA as a starter unit for straight-chain fatty acid biosynthesis.</text>
</comment>
<comment type="catalytic activity">
    <reaction>
        <text>butanoyl-CoA + NADP(+) = (2E)-butenoyl-CoA + NADPH + H(+)</text>
        <dbReference type="Rhea" id="RHEA:27906"/>
        <dbReference type="ChEBI" id="CHEBI:15378"/>
        <dbReference type="ChEBI" id="CHEBI:57332"/>
        <dbReference type="ChEBI" id="CHEBI:57371"/>
        <dbReference type="ChEBI" id="CHEBI:57783"/>
        <dbReference type="ChEBI" id="CHEBI:58349"/>
        <dbReference type="EC" id="1.3.1.86"/>
    </reaction>
</comment>
<comment type="cofactor">
    <cofactor evidence="1">
        <name>Zn(2+)</name>
        <dbReference type="ChEBI" id="CHEBI:29105"/>
    </cofactor>
</comment>
<comment type="activity regulation">
    <text evidence="2">Inhibited by NADPH at concentrations above 200 uM, by MgCl (30%), by ZnCl(2) (55%), and by CoCl, MnCl and CaCl (100%). Also inhibited by iodoacetamide, N-ethylmaleamide, the thiol group inhibitor beta-chloromercuribenzoate, palmitoyl-CoA and myristoyl-CoA.</text>
</comment>
<comment type="biophysicochemical properties">
    <kinetics>
        <KM evidence="2">15 uM for NADP (at 30 degrees Celsius and at pH 7.5)</KM>
        <KM evidence="2">18 uM for crotonyl-CoA (at 30 degrees Celsius and at pH 7.5)</KM>
    </kinetics>
    <phDependence>
        <text evidence="2">Optimum pH is 6.5.</text>
    </phDependence>
    <temperatureDependence>
        <text evidence="2">Optimum temperature 40 degrees Celsius.</text>
    </temperatureDependence>
</comment>
<comment type="subunit">
    <text evidence="2">Homodimer.</text>
</comment>
<comment type="similarity">
    <text evidence="3">Belongs to the zinc-containing alcohol dehydrogenase family. Crotonyl-CoA carboxylase/reductase subfamily.</text>
</comment>
<proteinExistence type="evidence at protein level"/>